<protein>
    <recommendedName>
        <fullName evidence="1">Carnitine operon protein CaiE</fullName>
    </recommendedName>
</protein>
<reference key="1">
    <citation type="journal article" date="2011" name="J. Bacteriol.">
        <title>Comparative genomics of 28 Salmonella enterica isolates: evidence for CRISPR-mediated adaptive sublineage evolution.</title>
        <authorList>
            <person name="Fricke W.F."/>
            <person name="Mammel M.K."/>
            <person name="McDermott P.F."/>
            <person name="Tartera C."/>
            <person name="White D.G."/>
            <person name="Leclerc J.E."/>
            <person name="Ravel J."/>
            <person name="Cebula T.A."/>
        </authorList>
    </citation>
    <scope>NUCLEOTIDE SEQUENCE [LARGE SCALE GENOMIC DNA]</scope>
    <source>
        <strain>SL254</strain>
    </source>
</reference>
<gene>
    <name evidence="1" type="primary">caiE</name>
    <name type="ordered locus">SNSL254_A0073</name>
</gene>
<dbReference type="EMBL" id="CP001113">
    <property type="protein sequence ID" value="ACF64102.1"/>
    <property type="molecule type" value="Genomic_DNA"/>
</dbReference>
<dbReference type="RefSeq" id="WP_000122863.1">
    <property type="nucleotide sequence ID" value="NZ_CCMR01000003.1"/>
</dbReference>
<dbReference type="SMR" id="B4T6J4"/>
<dbReference type="KEGG" id="see:SNSL254_A0073"/>
<dbReference type="HOGENOM" id="CLU_064827_4_2_6"/>
<dbReference type="UniPathway" id="UPA00117"/>
<dbReference type="Proteomes" id="UP000008824">
    <property type="component" value="Chromosome"/>
</dbReference>
<dbReference type="GO" id="GO:0016740">
    <property type="term" value="F:transferase activity"/>
    <property type="evidence" value="ECO:0007669"/>
    <property type="project" value="UniProtKB-KW"/>
</dbReference>
<dbReference type="GO" id="GO:0009437">
    <property type="term" value="P:carnitine metabolic process"/>
    <property type="evidence" value="ECO:0007669"/>
    <property type="project" value="UniProtKB-UniRule"/>
</dbReference>
<dbReference type="CDD" id="cd04745">
    <property type="entry name" value="LbH_paaY_like"/>
    <property type="match status" value="1"/>
</dbReference>
<dbReference type="FunFam" id="2.160.10.10:FF:000012">
    <property type="entry name" value="Carnitine operon protein CaiE"/>
    <property type="match status" value="1"/>
</dbReference>
<dbReference type="Gene3D" id="2.160.10.10">
    <property type="entry name" value="Hexapeptide repeat proteins"/>
    <property type="match status" value="1"/>
</dbReference>
<dbReference type="HAMAP" id="MF_01525">
    <property type="entry name" value="CaiE"/>
    <property type="match status" value="1"/>
</dbReference>
<dbReference type="InterPro" id="IPR023446">
    <property type="entry name" value="CaiE"/>
</dbReference>
<dbReference type="InterPro" id="IPR001451">
    <property type="entry name" value="Hexapep"/>
</dbReference>
<dbReference type="InterPro" id="IPR050484">
    <property type="entry name" value="Transf_Hexapept/Carb_Anhydrase"/>
</dbReference>
<dbReference type="InterPro" id="IPR011004">
    <property type="entry name" value="Trimer_LpxA-like_sf"/>
</dbReference>
<dbReference type="NCBIfam" id="NF010150">
    <property type="entry name" value="PRK13627.1"/>
    <property type="match status" value="1"/>
</dbReference>
<dbReference type="PANTHER" id="PTHR13061">
    <property type="entry name" value="DYNACTIN SUBUNIT P25"/>
    <property type="match status" value="1"/>
</dbReference>
<dbReference type="PANTHER" id="PTHR13061:SF29">
    <property type="entry name" value="GAMMA CARBONIC ANHYDRASE-LIKE 1, MITOCHONDRIAL-RELATED"/>
    <property type="match status" value="1"/>
</dbReference>
<dbReference type="Pfam" id="PF00132">
    <property type="entry name" value="Hexapep"/>
    <property type="match status" value="2"/>
</dbReference>
<dbReference type="SUPFAM" id="SSF51161">
    <property type="entry name" value="Trimeric LpxA-like enzymes"/>
    <property type="match status" value="1"/>
</dbReference>
<comment type="function">
    <text evidence="1">Overproduction of CaiE stimulates the activity of CaiB and CaiD.</text>
</comment>
<comment type="pathway">
    <text evidence="1">Amine and polyamine metabolism; carnitine metabolism.</text>
</comment>
<comment type="similarity">
    <text evidence="1">Belongs to the transferase hexapeptide repeat family.</text>
</comment>
<organism>
    <name type="scientific">Salmonella newport (strain SL254)</name>
    <dbReference type="NCBI Taxonomy" id="423368"/>
    <lineage>
        <taxon>Bacteria</taxon>
        <taxon>Pseudomonadati</taxon>
        <taxon>Pseudomonadota</taxon>
        <taxon>Gammaproteobacteria</taxon>
        <taxon>Enterobacterales</taxon>
        <taxon>Enterobacteriaceae</taxon>
        <taxon>Salmonella</taxon>
    </lineage>
</organism>
<proteinExistence type="inferred from homology"/>
<evidence type="ECO:0000255" key="1">
    <source>
        <dbReference type="HAMAP-Rule" id="MF_01525"/>
    </source>
</evidence>
<evidence type="ECO:0000256" key="2">
    <source>
        <dbReference type="SAM" id="MobiDB-lite"/>
    </source>
</evidence>
<keyword id="KW-0677">Repeat</keyword>
<keyword id="KW-0808">Transferase</keyword>
<sequence length="198" mass="21332">MSYYAFEGLIPVVHPDAFVHPSAVLIGDVIVGAGVYIGPLASLRGDYGRLILEAGSNLQDGCIMHGYCDTDTIVHENGHIGHGAILHGCVVGRDALVGMNSVIMDGAVIGEESIVAAMSFVKAGFQGEARQLLVGSPARVLRQVTDQELHWKRLNTKEYQDLAIRCRTGLSETKPLTQVEENRPRLKGTTDVKPKSAQ</sequence>
<accession>B4T6J4</accession>
<feature type="chain" id="PRO_1000200935" description="Carnitine operon protein CaiE">
    <location>
        <begin position="1"/>
        <end position="198"/>
    </location>
</feature>
<feature type="region of interest" description="Disordered" evidence="2">
    <location>
        <begin position="179"/>
        <end position="198"/>
    </location>
</feature>
<feature type="compositionally biased region" description="Basic and acidic residues" evidence="2">
    <location>
        <begin position="180"/>
        <end position="198"/>
    </location>
</feature>
<name>CAIE_SALNS</name>